<proteinExistence type="inferred from homology"/>
<name>ACKA_DESDA</name>
<sequence>MKILVINAGSSSCKYQLLEMDTHAVLCSGLAERIGQDEGRLTHKIAPDTDKEEKIVQTAHFPTHVQAMEMVIALLTDAEKGVIKDKSEIAGIGHRVLHGGEAVSDPVLVDERVKGIVRECAVLGPLHNPANLMGIEVAEKLFPGVPNVAVFDTEFGMGMPKEAFMYALPYELYEDLRIRRYGFHGTSHKYIAGATAKYLGKPLSELRSITMHLGNGSSMSCVRNGKCFDTSMGLTPLEGLIMGTRCGSIDPAIVPFVMEKKGLTPEQVDTLMNKKSGLLGLCGHTDMRDVHAEVEKGNERAALALKMLVRSIKKTLGSYYFLLDGKVDALVFTAGIGENDDIVRAEVCAGLENLGIKIDAKENGTRKAGARAISTPDSSIPVLIIPTNEELQIAMATVEVLGK</sequence>
<reference key="1">
    <citation type="submission" date="2009-01" db="EMBL/GenBank/DDBJ databases">
        <title>Complete sequence of Desulfovibrio desulfuricans subsp. desulfuricans str. ATCC 27774.</title>
        <authorList>
            <consortium name="US DOE Joint Genome Institute"/>
            <person name="Lucas S."/>
            <person name="Copeland A."/>
            <person name="Lapidus A."/>
            <person name="Glavina del Rio T."/>
            <person name="Tice H."/>
            <person name="Bruce D."/>
            <person name="Goodwin L."/>
            <person name="Pitluck S."/>
            <person name="Sims D."/>
            <person name="Lu M."/>
            <person name="Kiss H."/>
            <person name="Meineke L."/>
            <person name="Brettin T."/>
            <person name="Detter J.C."/>
            <person name="Han C."/>
            <person name="Larimer F."/>
            <person name="Land M."/>
            <person name="Hauser L."/>
            <person name="Kyrpides N."/>
            <person name="Ovchinnikova G."/>
            <person name="Hazen T.C."/>
        </authorList>
    </citation>
    <scope>NUCLEOTIDE SEQUENCE [LARGE SCALE GENOMIC DNA]</scope>
    <source>
        <strain>ATCC 27774 / DSM 6949 / MB</strain>
    </source>
</reference>
<comment type="function">
    <text evidence="1">Catalyzes the formation of acetyl phosphate from acetate and ATP. Can also catalyze the reverse reaction.</text>
</comment>
<comment type="catalytic activity">
    <reaction evidence="1">
        <text>acetate + ATP = acetyl phosphate + ADP</text>
        <dbReference type="Rhea" id="RHEA:11352"/>
        <dbReference type="ChEBI" id="CHEBI:22191"/>
        <dbReference type="ChEBI" id="CHEBI:30089"/>
        <dbReference type="ChEBI" id="CHEBI:30616"/>
        <dbReference type="ChEBI" id="CHEBI:456216"/>
        <dbReference type="EC" id="2.7.2.1"/>
    </reaction>
</comment>
<comment type="cofactor">
    <cofactor evidence="1">
        <name>Mg(2+)</name>
        <dbReference type="ChEBI" id="CHEBI:18420"/>
    </cofactor>
    <cofactor evidence="1">
        <name>Mn(2+)</name>
        <dbReference type="ChEBI" id="CHEBI:29035"/>
    </cofactor>
    <text evidence="1">Mg(2+). Can also accept Mn(2+).</text>
</comment>
<comment type="pathway">
    <text evidence="1">Metabolic intermediate biosynthesis; acetyl-CoA biosynthesis; acetyl-CoA from acetate: step 1/2.</text>
</comment>
<comment type="subunit">
    <text evidence="1">Homodimer.</text>
</comment>
<comment type="subcellular location">
    <subcellularLocation>
        <location evidence="1">Cytoplasm</location>
    </subcellularLocation>
</comment>
<comment type="similarity">
    <text evidence="1">Belongs to the acetokinase family.</text>
</comment>
<dbReference type="EC" id="2.7.2.1" evidence="1"/>
<dbReference type="EMBL" id="CP001358">
    <property type="protein sequence ID" value="ACL48211.1"/>
    <property type="molecule type" value="Genomic_DNA"/>
</dbReference>
<dbReference type="SMR" id="B8J374"/>
<dbReference type="STRING" id="525146.Ddes_0296"/>
<dbReference type="KEGG" id="dds:Ddes_0296"/>
<dbReference type="eggNOG" id="COG0282">
    <property type="taxonomic scope" value="Bacteria"/>
</dbReference>
<dbReference type="HOGENOM" id="CLU_020352_0_1_7"/>
<dbReference type="UniPathway" id="UPA00340">
    <property type="reaction ID" value="UER00458"/>
</dbReference>
<dbReference type="GO" id="GO:0005737">
    <property type="term" value="C:cytoplasm"/>
    <property type="evidence" value="ECO:0007669"/>
    <property type="project" value="UniProtKB-SubCell"/>
</dbReference>
<dbReference type="GO" id="GO:0008776">
    <property type="term" value="F:acetate kinase activity"/>
    <property type="evidence" value="ECO:0007669"/>
    <property type="project" value="UniProtKB-UniRule"/>
</dbReference>
<dbReference type="GO" id="GO:0005524">
    <property type="term" value="F:ATP binding"/>
    <property type="evidence" value="ECO:0007669"/>
    <property type="project" value="UniProtKB-KW"/>
</dbReference>
<dbReference type="GO" id="GO:0000287">
    <property type="term" value="F:magnesium ion binding"/>
    <property type="evidence" value="ECO:0007669"/>
    <property type="project" value="UniProtKB-UniRule"/>
</dbReference>
<dbReference type="GO" id="GO:0006083">
    <property type="term" value="P:acetate metabolic process"/>
    <property type="evidence" value="ECO:0007669"/>
    <property type="project" value="TreeGrafter"/>
</dbReference>
<dbReference type="GO" id="GO:0006085">
    <property type="term" value="P:acetyl-CoA biosynthetic process"/>
    <property type="evidence" value="ECO:0007669"/>
    <property type="project" value="UniProtKB-UniRule"/>
</dbReference>
<dbReference type="CDD" id="cd24010">
    <property type="entry name" value="ASKHA_NBD_AcK_PK"/>
    <property type="match status" value="1"/>
</dbReference>
<dbReference type="Gene3D" id="3.30.420.40">
    <property type="match status" value="2"/>
</dbReference>
<dbReference type="HAMAP" id="MF_00020">
    <property type="entry name" value="Acetate_kinase"/>
    <property type="match status" value="1"/>
</dbReference>
<dbReference type="InterPro" id="IPR004372">
    <property type="entry name" value="Ac/propionate_kinase"/>
</dbReference>
<dbReference type="InterPro" id="IPR000890">
    <property type="entry name" value="Aliphatic_acid_kin_short-chain"/>
</dbReference>
<dbReference type="InterPro" id="IPR023865">
    <property type="entry name" value="Aliphatic_acid_kinase_CS"/>
</dbReference>
<dbReference type="InterPro" id="IPR043129">
    <property type="entry name" value="ATPase_NBD"/>
</dbReference>
<dbReference type="NCBIfam" id="TIGR00016">
    <property type="entry name" value="ackA"/>
    <property type="match status" value="1"/>
</dbReference>
<dbReference type="PANTHER" id="PTHR21060">
    <property type="entry name" value="ACETATE KINASE"/>
    <property type="match status" value="1"/>
</dbReference>
<dbReference type="PANTHER" id="PTHR21060:SF15">
    <property type="entry name" value="ACETATE KINASE-RELATED"/>
    <property type="match status" value="1"/>
</dbReference>
<dbReference type="Pfam" id="PF00871">
    <property type="entry name" value="Acetate_kinase"/>
    <property type="match status" value="1"/>
</dbReference>
<dbReference type="PIRSF" id="PIRSF000722">
    <property type="entry name" value="Acetate_prop_kin"/>
    <property type="match status" value="1"/>
</dbReference>
<dbReference type="PRINTS" id="PR00471">
    <property type="entry name" value="ACETATEKNASE"/>
</dbReference>
<dbReference type="SUPFAM" id="SSF53067">
    <property type="entry name" value="Actin-like ATPase domain"/>
    <property type="match status" value="2"/>
</dbReference>
<dbReference type="PROSITE" id="PS01075">
    <property type="entry name" value="ACETATE_KINASE_1"/>
    <property type="match status" value="1"/>
</dbReference>
<protein>
    <recommendedName>
        <fullName evidence="1">Acetate kinase</fullName>
        <ecNumber evidence="1">2.7.2.1</ecNumber>
    </recommendedName>
    <alternativeName>
        <fullName evidence="1">Acetokinase</fullName>
    </alternativeName>
</protein>
<accession>B8J374</accession>
<organism>
    <name type="scientific">Desulfovibrio desulfuricans (strain ATCC 27774 / DSM 6949 / MB)</name>
    <dbReference type="NCBI Taxonomy" id="525146"/>
    <lineage>
        <taxon>Bacteria</taxon>
        <taxon>Pseudomonadati</taxon>
        <taxon>Thermodesulfobacteriota</taxon>
        <taxon>Desulfovibrionia</taxon>
        <taxon>Desulfovibrionales</taxon>
        <taxon>Desulfovibrionaceae</taxon>
        <taxon>Desulfovibrio</taxon>
    </lineage>
</organism>
<evidence type="ECO:0000255" key="1">
    <source>
        <dbReference type="HAMAP-Rule" id="MF_00020"/>
    </source>
</evidence>
<keyword id="KW-0067">ATP-binding</keyword>
<keyword id="KW-0963">Cytoplasm</keyword>
<keyword id="KW-0418">Kinase</keyword>
<keyword id="KW-0460">Magnesium</keyword>
<keyword id="KW-0479">Metal-binding</keyword>
<keyword id="KW-0547">Nucleotide-binding</keyword>
<keyword id="KW-0808">Transferase</keyword>
<gene>
    <name evidence="1" type="primary">ackA</name>
    <name type="ordered locus">Ddes_0296</name>
</gene>
<feature type="chain" id="PRO_1000116800" description="Acetate kinase">
    <location>
        <begin position="1"/>
        <end position="403"/>
    </location>
</feature>
<feature type="active site" description="Proton donor/acceptor" evidence="1">
    <location>
        <position position="152"/>
    </location>
</feature>
<feature type="binding site" evidence="1">
    <location>
        <position position="7"/>
    </location>
    <ligand>
        <name>Mg(2+)</name>
        <dbReference type="ChEBI" id="CHEBI:18420"/>
    </ligand>
</feature>
<feature type="binding site" evidence="1">
    <location>
        <position position="14"/>
    </location>
    <ligand>
        <name>ATP</name>
        <dbReference type="ChEBI" id="CHEBI:30616"/>
    </ligand>
</feature>
<feature type="binding site" evidence="1">
    <location>
        <position position="95"/>
    </location>
    <ligand>
        <name>substrate</name>
    </ligand>
</feature>
<feature type="binding site" evidence="1">
    <location>
        <begin position="212"/>
        <end position="216"/>
    </location>
    <ligand>
        <name>ATP</name>
        <dbReference type="ChEBI" id="CHEBI:30616"/>
    </ligand>
</feature>
<feature type="binding site" evidence="1">
    <location>
        <begin position="286"/>
        <end position="288"/>
    </location>
    <ligand>
        <name>ATP</name>
        <dbReference type="ChEBI" id="CHEBI:30616"/>
    </ligand>
</feature>
<feature type="binding site" evidence="1">
    <location>
        <begin position="335"/>
        <end position="339"/>
    </location>
    <ligand>
        <name>ATP</name>
        <dbReference type="ChEBI" id="CHEBI:30616"/>
    </ligand>
</feature>
<feature type="binding site" evidence="1">
    <location>
        <position position="389"/>
    </location>
    <ligand>
        <name>Mg(2+)</name>
        <dbReference type="ChEBI" id="CHEBI:18420"/>
    </ligand>
</feature>
<feature type="site" description="Transition state stabilizer" evidence="1">
    <location>
        <position position="184"/>
    </location>
</feature>
<feature type="site" description="Transition state stabilizer" evidence="1">
    <location>
        <position position="245"/>
    </location>
</feature>